<gene>
    <name type="primary">csm3</name>
    <name type="ordered locus">Rv2821c</name>
</gene>
<name>CSM3_MYCTU</name>
<dbReference type="EC" id="3.1.-.-"/>
<dbReference type="EMBL" id="AL123456">
    <property type="protein sequence ID" value="CCP45621.1"/>
    <property type="molecule type" value="Genomic_DNA"/>
</dbReference>
<dbReference type="PIR" id="H70691">
    <property type="entry name" value="H70691"/>
</dbReference>
<dbReference type="RefSeq" id="NP_217337.1">
    <property type="nucleotide sequence ID" value="NC_000962.3"/>
</dbReference>
<dbReference type="RefSeq" id="WP_003414292.1">
    <property type="nucleotide sequence ID" value="NZ_NVQJ01000006.1"/>
</dbReference>
<dbReference type="PDB" id="8X5D">
    <property type="method" value="EM"/>
    <property type="resolution" value="3.10 A"/>
    <property type="chains" value="G/H/I/J/K/L=1-236"/>
</dbReference>
<dbReference type="PDBsum" id="8X5D"/>
<dbReference type="SMR" id="P9WJF9"/>
<dbReference type="FunCoup" id="P9WJF9">
    <property type="interactions" value="1"/>
</dbReference>
<dbReference type="STRING" id="83332.Rv2821c"/>
<dbReference type="PaxDb" id="83332-Rv2821c"/>
<dbReference type="DNASU" id="887741"/>
<dbReference type="GeneID" id="887741"/>
<dbReference type="KEGG" id="mtu:Rv2821c"/>
<dbReference type="KEGG" id="mtv:RVBD_2821c"/>
<dbReference type="TubercuList" id="Rv2821c"/>
<dbReference type="eggNOG" id="COG1337">
    <property type="taxonomic scope" value="Bacteria"/>
</dbReference>
<dbReference type="InParanoid" id="P9WJF9"/>
<dbReference type="OrthoDB" id="5242922at2"/>
<dbReference type="PhylomeDB" id="P9WJF9"/>
<dbReference type="PHI-base" id="PHI:12083"/>
<dbReference type="Proteomes" id="UP000001584">
    <property type="component" value="Chromosome"/>
</dbReference>
<dbReference type="GO" id="GO:0004519">
    <property type="term" value="F:endonuclease activity"/>
    <property type="evidence" value="ECO:0007669"/>
    <property type="project" value="UniProtKB-KW"/>
</dbReference>
<dbReference type="GO" id="GO:0003723">
    <property type="term" value="F:RNA binding"/>
    <property type="evidence" value="ECO:0007669"/>
    <property type="project" value="UniProtKB-KW"/>
</dbReference>
<dbReference type="GO" id="GO:0051607">
    <property type="term" value="P:defense response to virus"/>
    <property type="evidence" value="ECO:0007669"/>
    <property type="project" value="UniProtKB-KW"/>
</dbReference>
<dbReference type="CDD" id="cd09684">
    <property type="entry name" value="Csm3_III-A"/>
    <property type="match status" value="1"/>
</dbReference>
<dbReference type="InterPro" id="IPR013412">
    <property type="entry name" value="CRISPR-assoc_RAMP_Csm3"/>
</dbReference>
<dbReference type="InterPro" id="IPR052216">
    <property type="entry name" value="CRISPR_Csm3_endoribonuclease"/>
</dbReference>
<dbReference type="InterPro" id="IPR005537">
    <property type="entry name" value="RAMP_III_fam"/>
</dbReference>
<dbReference type="NCBIfam" id="TIGR02582">
    <property type="entry name" value="cas7_TM1809"/>
    <property type="match status" value="1"/>
</dbReference>
<dbReference type="PANTHER" id="PTHR35579">
    <property type="entry name" value="CRISPR SYSTEM CMS ENDORIBONUCLEASE CSM3"/>
    <property type="match status" value="1"/>
</dbReference>
<dbReference type="PANTHER" id="PTHR35579:SF3">
    <property type="entry name" value="CRISPR SYSTEM CMS ENDORIBONUCLEASE CSM3"/>
    <property type="match status" value="1"/>
</dbReference>
<dbReference type="Pfam" id="PF03787">
    <property type="entry name" value="RAMPs"/>
    <property type="match status" value="1"/>
</dbReference>
<protein>
    <recommendedName>
        <fullName>CRISPR system Cms endoribonuclease Csm3</fullName>
        <ecNumber>3.1.-.-</ecNumber>
    </recommendedName>
    <alternativeName>
        <fullName>CRISPR type III A-associated RAMP protein Csm3</fullName>
    </alternativeName>
</protein>
<keyword id="KW-0002">3D-structure</keyword>
<keyword id="KW-0051">Antiviral defense</keyword>
<keyword id="KW-0255">Endonuclease</keyword>
<keyword id="KW-0378">Hydrolase</keyword>
<keyword id="KW-0540">Nuclease</keyword>
<keyword id="KW-1185">Reference proteome</keyword>
<keyword id="KW-0694">RNA-binding</keyword>
<accession>P9WJF9</accession>
<accession>F2GLB3</accession>
<accession>L0TAZ2</accession>
<accession>P71631</accession>
<accession>Q7D6I3</accession>
<reference key="1">
    <citation type="journal article" date="1998" name="Nature">
        <title>Deciphering the biology of Mycobacterium tuberculosis from the complete genome sequence.</title>
        <authorList>
            <person name="Cole S.T."/>
            <person name="Brosch R."/>
            <person name="Parkhill J."/>
            <person name="Garnier T."/>
            <person name="Churcher C.M."/>
            <person name="Harris D.E."/>
            <person name="Gordon S.V."/>
            <person name="Eiglmeier K."/>
            <person name="Gas S."/>
            <person name="Barry C.E. III"/>
            <person name="Tekaia F."/>
            <person name="Badcock K."/>
            <person name="Basham D."/>
            <person name="Brown D."/>
            <person name="Chillingworth T."/>
            <person name="Connor R."/>
            <person name="Davies R.M."/>
            <person name="Devlin K."/>
            <person name="Feltwell T."/>
            <person name="Gentles S."/>
            <person name="Hamlin N."/>
            <person name="Holroyd S."/>
            <person name="Hornsby T."/>
            <person name="Jagels K."/>
            <person name="Krogh A."/>
            <person name="McLean J."/>
            <person name="Moule S."/>
            <person name="Murphy L.D."/>
            <person name="Oliver S."/>
            <person name="Osborne J."/>
            <person name="Quail M.A."/>
            <person name="Rajandream M.A."/>
            <person name="Rogers J."/>
            <person name="Rutter S."/>
            <person name="Seeger K."/>
            <person name="Skelton S."/>
            <person name="Squares S."/>
            <person name="Squares R."/>
            <person name="Sulston J.E."/>
            <person name="Taylor K."/>
            <person name="Whitehead S."/>
            <person name="Barrell B.G."/>
        </authorList>
    </citation>
    <scope>NUCLEOTIDE SEQUENCE [LARGE SCALE GENOMIC DNA]</scope>
    <source>
        <strain>ATCC 25618 / H37Rv</strain>
    </source>
</reference>
<reference key="2">
    <citation type="journal article" date="2011" name="Mol. Cell. Proteomics">
        <title>Proteogenomic analysis of Mycobacterium tuberculosis by high resolution mass spectrometry.</title>
        <authorList>
            <person name="Kelkar D.S."/>
            <person name="Kumar D."/>
            <person name="Kumar P."/>
            <person name="Balakrishnan L."/>
            <person name="Muthusamy B."/>
            <person name="Yadav A.K."/>
            <person name="Shrivastava P."/>
            <person name="Marimuthu A."/>
            <person name="Anand S."/>
            <person name="Sundaram H."/>
            <person name="Kingsbury R."/>
            <person name="Harsha H.C."/>
            <person name="Nair B."/>
            <person name="Prasad T.S."/>
            <person name="Chauhan D.S."/>
            <person name="Katoch K."/>
            <person name="Katoch V.M."/>
            <person name="Kumar P."/>
            <person name="Chaerkady R."/>
            <person name="Ramachandran S."/>
            <person name="Dash D."/>
            <person name="Pandey A."/>
        </authorList>
    </citation>
    <scope>IDENTIFICATION BY MASS SPECTROMETRY [LARGE SCALE ANALYSIS]</scope>
    <source>
        <strain>ATCC 25618 / H37Rv</strain>
    </source>
</reference>
<reference key="3">
    <citation type="journal article" date="2019" name="FASEB J.">
        <title>Mycobacterium tuberculosis type III-A CRISPR/Cas system crRNA and its maturation have atypical features.</title>
        <authorList>
            <person name="Wei W."/>
            <person name="Zhang S."/>
            <person name="Fleming J."/>
            <person name="Chen Y."/>
            <person name="Li Z."/>
            <person name="Fan S."/>
            <person name="Liu Y."/>
            <person name="Wang W."/>
            <person name="Wang T."/>
            <person name="Liu Y."/>
            <person name="Ren B."/>
            <person name="Wang M."/>
            <person name="Jiao J."/>
            <person name="Chen Y."/>
            <person name="Zhou Y."/>
            <person name="Zhou Y."/>
            <person name="Gu S."/>
            <person name="Zhang X."/>
            <person name="Wan L."/>
            <person name="Chen T."/>
            <person name="Zhou L."/>
            <person name="Chen Y."/>
            <person name="Zhang X.E."/>
            <person name="Li C."/>
            <person name="Zhang H."/>
            <person name="Bi L."/>
        </authorList>
    </citation>
    <scope>FUNCTION IN PLASMID RESISTANCE</scope>
    <scope>SUBUNIT</scope>
    <scope>DISRUPTION PHENOTYPE</scope>
    <source>
        <strain>H37Rv</strain>
    </source>
</reference>
<comment type="function">
    <text evidence="2 4">CRISPR (clustered regularly interspaced short palindromic repeat) is an adaptive immune system that provides protection against mobile genetic elements (viruses, transposable elements and conjugative plasmids). CRISPR clusters contain spacers, sequences complementary to antecedent mobile elements, and target invading nucleic acids. CRISPR clusters are transcribed and processed into CRISPR RNA (crRNA). The type III-A Csm effector complex binds crRNA and acts as a crRNA-guided RNase, DNase and cyclic oligoadenylate synthase; binding of target RNA cognate to the crRNA is required for all activities (Probable). This CRISPR-Cas system protects bacteria against transformation with plasmids containing DNA homologous to its spacer regions (PubMed:29979631).</text>
</comment>
<comment type="function">
    <text evidence="1">This subunit has the target ssRNA endonuclease activity; it cleaves multiple sites in the target RNA at 6 nucleotide intervals.</text>
</comment>
<comment type="subunit">
    <text evidence="2">Part of the Csm effector complex that includes Cas10, Csm2, Csm3, Csm4 and Csm5.</text>
</comment>
<comment type="disruption phenotype">
    <text evidence="2">Deletion of the entire CRISPR-Cas locus (cas6 to cas2, Rv2824c to Rv2816c) decreases resistance to plasmids encoding spacer elements about 6-fold.</text>
</comment>
<comment type="miscellaneous">
    <text evidence="4">Encoded in a type III-A CRISPR locus.</text>
</comment>
<comment type="similarity">
    <text evidence="3">Belongs to the CRISPR-associated Csm3 family.</text>
</comment>
<organism>
    <name type="scientific">Mycobacterium tuberculosis (strain ATCC 25618 / H37Rv)</name>
    <dbReference type="NCBI Taxonomy" id="83332"/>
    <lineage>
        <taxon>Bacteria</taxon>
        <taxon>Bacillati</taxon>
        <taxon>Actinomycetota</taxon>
        <taxon>Actinomycetes</taxon>
        <taxon>Mycobacteriales</taxon>
        <taxon>Mycobacteriaceae</taxon>
        <taxon>Mycobacterium</taxon>
        <taxon>Mycobacterium tuberculosis complex</taxon>
    </lineage>
</organism>
<proteinExistence type="evidence at protein level"/>
<feature type="chain" id="PRO_0000418226" description="CRISPR system Cms endoribonuclease Csm3">
    <location>
        <begin position="1"/>
        <end position="236"/>
    </location>
</feature>
<feature type="strand" evidence="5">
    <location>
        <begin position="6"/>
        <end position="18"/>
    </location>
</feature>
<feature type="turn" evidence="5">
    <location>
        <begin position="42"/>
        <end position="44"/>
    </location>
</feature>
<feature type="strand" evidence="5">
    <location>
        <begin position="47"/>
        <end position="49"/>
    </location>
</feature>
<feature type="helix" evidence="5">
    <location>
        <begin position="51"/>
        <end position="68"/>
    </location>
</feature>
<feature type="turn" evidence="5">
    <location>
        <begin position="69"/>
        <end position="71"/>
    </location>
</feature>
<feature type="turn" evidence="5">
    <location>
        <begin position="82"/>
        <end position="87"/>
    </location>
</feature>
<feature type="strand" evidence="5">
    <location>
        <begin position="91"/>
        <end position="94"/>
    </location>
</feature>
<feature type="strand" evidence="5">
    <location>
        <begin position="98"/>
        <end position="102"/>
    </location>
</feature>
<feature type="strand" evidence="5">
    <location>
        <begin position="104"/>
        <end position="106"/>
    </location>
</feature>
<feature type="helix" evidence="5">
    <location>
        <begin position="109"/>
        <end position="114"/>
    </location>
</feature>
<feature type="strand" evidence="5">
    <location>
        <begin position="120"/>
        <end position="129"/>
    </location>
</feature>
<feature type="turn" evidence="5">
    <location>
        <begin position="131"/>
        <end position="133"/>
    </location>
</feature>
<feature type="strand" evidence="5">
    <location>
        <begin position="136"/>
        <end position="144"/>
    </location>
</feature>
<feature type="strand" evidence="5">
    <location>
        <begin position="149"/>
        <end position="159"/>
    </location>
</feature>
<feature type="helix" evidence="5">
    <location>
        <begin position="174"/>
        <end position="192"/>
    </location>
</feature>
<feature type="strand" evidence="5">
    <location>
        <begin position="196"/>
        <end position="198"/>
    </location>
</feature>
<feature type="helix" evidence="5">
    <location>
        <begin position="200"/>
        <end position="202"/>
    </location>
</feature>
<feature type="strand" evidence="5">
    <location>
        <begin position="207"/>
        <end position="219"/>
    </location>
</feature>
<feature type="strand" evidence="5">
    <location>
        <begin position="223"/>
        <end position="225"/>
    </location>
</feature>
<feature type="helix" evidence="5">
    <location>
        <begin position="226"/>
        <end position="233"/>
    </location>
</feature>
<evidence type="ECO:0000250" key="1">
    <source>
        <dbReference type="UniProtKB" id="A0A0A7HIF0"/>
    </source>
</evidence>
<evidence type="ECO:0000269" key="2">
    <source>
    </source>
</evidence>
<evidence type="ECO:0000305" key="3"/>
<evidence type="ECO:0000305" key="4">
    <source>
    </source>
</evidence>
<evidence type="ECO:0007829" key="5">
    <source>
        <dbReference type="PDB" id="8X5D"/>
    </source>
</evidence>
<sequence>MTTSYAKIEITGTLTVLTGLQIGAGDGFSAIGAVDKPVVRDPLSRLPMIPGTSLKGKVRTLLSRQYGADTETFYRKPNEDHAHIRRLFGDTEEYMTGRLVFRDTKLTNKDDLEARGAKTLTEVKFENAINRVTAKANLRQMERVIPGSEFAFSLVYEVSFGTPGEEQKASLPSSDEIIEDFNAIARGLKLLELDYLGGSGTRGYGQVKFSNLKARAAVGALDGSLLEKLNHELAAV</sequence>